<sequence>MPQKVLITSALPYANGPLHFGHIAGVYLPADVYARFRRLLGDDVLYICGSDEFGIAITLNADREGLGYQEYVDMYHKLHKDTFEKLGFALDFFSRTTNPFHAELVQDFYSQLKASGLIENRISEQLYSEQEQRFLADRYVEGTCPRCGFDHARGDECQSCGADYEAIDLIDPKSKISGVELVKKETEHSYFLLDRMKDALLSFIQGCYLPDHVRKFVVDYIEHVRSRAITRDLSWGIPVPDFPGKVFYVWFDAPIGYISGTMEWAASQGNPDEWKRFWLEDGVEYVQFIGKDNLPFHSVVFPAMELGQKLDYKKVDALVVSEFYLLEGRQFSKSEGNYVDMDKFLSSYSLDKLRYVLAATAPETSDSEFTFLDFKTRCNSELVGKFGNFINRVLAFAEKNHYDKLSYHSVVLEDSDRAFLEEVRQLVRDAEKCYREYSLRKATSVIMSLAALGNVYFNQQAPWKLLKEGTRERVEAILFCACYCQKLLALISYPIIPESAVAIWEMISPKSLENCNLDTMYARDLWKEEILDVINEEFHLKSPRLLFTTVE</sequence>
<comment type="function">
    <text evidence="1">Is required not only for elongation of protein synthesis but also for the initiation of all mRNA translation through initiator tRNA(fMet) aminoacylation.</text>
</comment>
<comment type="catalytic activity">
    <reaction>
        <text>tRNA(Met) + L-methionine + ATP = L-methionyl-tRNA(Met) + AMP + diphosphate</text>
        <dbReference type="Rhea" id="RHEA:13481"/>
        <dbReference type="Rhea" id="RHEA-COMP:9667"/>
        <dbReference type="Rhea" id="RHEA-COMP:9698"/>
        <dbReference type="ChEBI" id="CHEBI:30616"/>
        <dbReference type="ChEBI" id="CHEBI:33019"/>
        <dbReference type="ChEBI" id="CHEBI:57844"/>
        <dbReference type="ChEBI" id="CHEBI:78442"/>
        <dbReference type="ChEBI" id="CHEBI:78530"/>
        <dbReference type="ChEBI" id="CHEBI:456215"/>
        <dbReference type="EC" id="6.1.1.10"/>
    </reaction>
</comment>
<comment type="cofactor">
    <cofactor evidence="1">
        <name>Zn(2+)</name>
        <dbReference type="ChEBI" id="CHEBI:29105"/>
    </cofactor>
    <text evidence="1">Binds 1 zinc ion per subunit.</text>
</comment>
<comment type="subunit">
    <text evidence="1">Monomer.</text>
</comment>
<comment type="subcellular location">
    <subcellularLocation>
        <location evidence="1">Cytoplasm</location>
    </subcellularLocation>
</comment>
<comment type="similarity">
    <text evidence="2">Belongs to the class-I aminoacyl-tRNA synthetase family. MetG type 1 subfamily.</text>
</comment>
<gene>
    <name type="primary">metG</name>
    <name type="ordered locus">CPn_0122</name>
    <name type="ordered locus">CP_0651</name>
    <name type="ordered locus">CpB0123</name>
</gene>
<dbReference type="EC" id="6.1.1.10"/>
<dbReference type="EMBL" id="AE001363">
    <property type="protein sequence ID" value="AAD18275.1"/>
    <property type="molecule type" value="Genomic_DNA"/>
</dbReference>
<dbReference type="EMBL" id="AE002161">
    <property type="protein sequence ID" value="AAF38466.1"/>
    <property type="molecule type" value="Genomic_DNA"/>
</dbReference>
<dbReference type="EMBL" id="BA000008">
    <property type="protein sequence ID" value="BAA98333.1"/>
    <property type="molecule type" value="Genomic_DNA"/>
</dbReference>
<dbReference type="EMBL" id="AE009440">
    <property type="protein sequence ID" value="AAP98056.1"/>
    <property type="molecule type" value="Genomic_DNA"/>
</dbReference>
<dbReference type="PIR" id="C86506">
    <property type="entry name" value="C86506"/>
</dbReference>
<dbReference type="PIR" id="H72117">
    <property type="entry name" value="H72117"/>
</dbReference>
<dbReference type="PIR" id="H81552">
    <property type="entry name" value="H81552"/>
</dbReference>
<dbReference type="RefSeq" id="NP_224330.1">
    <property type="nucleotide sequence ID" value="NC_000922.1"/>
</dbReference>
<dbReference type="RefSeq" id="WP_010882772.1">
    <property type="nucleotide sequence ID" value="NZ_LN847257.1"/>
</dbReference>
<dbReference type="RefSeq" id="WP_010892134.1">
    <property type="nucleotide sequence ID" value="NZ_LN846995.1"/>
</dbReference>
<dbReference type="SMR" id="Q9Z959"/>
<dbReference type="STRING" id="406984.CPK_ORF00634"/>
<dbReference type="GeneID" id="45050167"/>
<dbReference type="KEGG" id="cpa:CP_0651"/>
<dbReference type="KEGG" id="cpj:metG"/>
<dbReference type="KEGG" id="cpn:CPn_0122"/>
<dbReference type="KEGG" id="cpt:CpB0123"/>
<dbReference type="PATRIC" id="fig|115713.3.peg.137"/>
<dbReference type="eggNOG" id="COG0143">
    <property type="taxonomic scope" value="Bacteria"/>
</dbReference>
<dbReference type="HOGENOM" id="CLU_009710_1_2_0"/>
<dbReference type="OrthoDB" id="9810191at2"/>
<dbReference type="Proteomes" id="UP000000583">
    <property type="component" value="Chromosome"/>
</dbReference>
<dbReference type="Proteomes" id="UP000000801">
    <property type="component" value="Chromosome"/>
</dbReference>
<dbReference type="GO" id="GO:0005829">
    <property type="term" value="C:cytosol"/>
    <property type="evidence" value="ECO:0007669"/>
    <property type="project" value="TreeGrafter"/>
</dbReference>
<dbReference type="GO" id="GO:0005524">
    <property type="term" value="F:ATP binding"/>
    <property type="evidence" value="ECO:0007669"/>
    <property type="project" value="UniProtKB-UniRule"/>
</dbReference>
<dbReference type="GO" id="GO:0046872">
    <property type="term" value="F:metal ion binding"/>
    <property type="evidence" value="ECO:0007669"/>
    <property type="project" value="UniProtKB-KW"/>
</dbReference>
<dbReference type="GO" id="GO:0004825">
    <property type="term" value="F:methionine-tRNA ligase activity"/>
    <property type="evidence" value="ECO:0007669"/>
    <property type="project" value="UniProtKB-UniRule"/>
</dbReference>
<dbReference type="GO" id="GO:0006431">
    <property type="term" value="P:methionyl-tRNA aminoacylation"/>
    <property type="evidence" value="ECO:0007669"/>
    <property type="project" value="UniProtKB-UniRule"/>
</dbReference>
<dbReference type="CDD" id="cd07957">
    <property type="entry name" value="Anticodon_Ia_Met"/>
    <property type="match status" value="1"/>
</dbReference>
<dbReference type="CDD" id="cd00814">
    <property type="entry name" value="MetRS_core"/>
    <property type="match status" value="1"/>
</dbReference>
<dbReference type="FunFam" id="2.20.28.20:FF:000001">
    <property type="entry name" value="Methionine--tRNA ligase"/>
    <property type="match status" value="1"/>
</dbReference>
<dbReference type="Gene3D" id="3.40.50.620">
    <property type="entry name" value="HUPs"/>
    <property type="match status" value="1"/>
</dbReference>
<dbReference type="Gene3D" id="1.10.730.10">
    <property type="entry name" value="Isoleucyl-tRNA Synthetase, Domain 1"/>
    <property type="match status" value="1"/>
</dbReference>
<dbReference type="Gene3D" id="2.20.28.20">
    <property type="entry name" value="Methionyl-tRNA synthetase, Zn-domain"/>
    <property type="match status" value="1"/>
</dbReference>
<dbReference type="HAMAP" id="MF_00098">
    <property type="entry name" value="Met_tRNA_synth_type1"/>
    <property type="match status" value="1"/>
</dbReference>
<dbReference type="InterPro" id="IPR041872">
    <property type="entry name" value="Anticodon_Met"/>
</dbReference>
<dbReference type="InterPro" id="IPR023458">
    <property type="entry name" value="Met-tRNA_ligase_1"/>
</dbReference>
<dbReference type="InterPro" id="IPR014758">
    <property type="entry name" value="Met-tRNA_synth"/>
</dbReference>
<dbReference type="InterPro" id="IPR015413">
    <property type="entry name" value="Methionyl/Leucyl_tRNA_Synth"/>
</dbReference>
<dbReference type="InterPro" id="IPR033911">
    <property type="entry name" value="MetRS_core"/>
</dbReference>
<dbReference type="InterPro" id="IPR029038">
    <property type="entry name" value="MetRS_Zn"/>
</dbReference>
<dbReference type="InterPro" id="IPR014729">
    <property type="entry name" value="Rossmann-like_a/b/a_fold"/>
</dbReference>
<dbReference type="InterPro" id="IPR009080">
    <property type="entry name" value="tRNAsynth_Ia_anticodon-bd"/>
</dbReference>
<dbReference type="NCBIfam" id="TIGR00398">
    <property type="entry name" value="metG"/>
    <property type="match status" value="1"/>
</dbReference>
<dbReference type="PANTHER" id="PTHR45765">
    <property type="entry name" value="METHIONINE--TRNA LIGASE"/>
    <property type="match status" value="1"/>
</dbReference>
<dbReference type="PANTHER" id="PTHR45765:SF1">
    <property type="entry name" value="METHIONINE--TRNA LIGASE, CYTOPLASMIC"/>
    <property type="match status" value="1"/>
</dbReference>
<dbReference type="Pfam" id="PF19303">
    <property type="entry name" value="Anticodon_3"/>
    <property type="match status" value="1"/>
</dbReference>
<dbReference type="Pfam" id="PF09334">
    <property type="entry name" value="tRNA-synt_1g"/>
    <property type="match status" value="1"/>
</dbReference>
<dbReference type="PRINTS" id="PR01041">
    <property type="entry name" value="TRNASYNTHMET"/>
</dbReference>
<dbReference type="SUPFAM" id="SSF47323">
    <property type="entry name" value="Anticodon-binding domain of a subclass of class I aminoacyl-tRNA synthetases"/>
    <property type="match status" value="1"/>
</dbReference>
<dbReference type="SUPFAM" id="SSF57770">
    <property type="entry name" value="Methionyl-tRNA synthetase (MetRS), Zn-domain"/>
    <property type="match status" value="1"/>
</dbReference>
<dbReference type="SUPFAM" id="SSF52374">
    <property type="entry name" value="Nucleotidylyl transferase"/>
    <property type="match status" value="1"/>
</dbReference>
<evidence type="ECO:0000250" key="1"/>
<evidence type="ECO:0000305" key="2"/>
<name>SYM_CHLPN</name>
<feature type="chain" id="PRO_0000139121" description="Methionine--tRNA ligase">
    <location>
        <begin position="1"/>
        <end position="551"/>
    </location>
</feature>
<feature type="short sequence motif" description="'HIGH' region">
    <location>
        <begin position="12"/>
        <end position="22"/>
    </location>
</feature>
<feature type="short sequence motif" description="'KMSKS' region">
    <location>
        <begin position="330"/>
        <end position="334"/>
    </location>
</feature>
<feature type="binding site" evidence="1">
    <location>
        <position position="144"/>
    </location>
    <ligand>
        <name>Zn(2+)</name>
        <dbReference type="ChEBI" id="CHEBI:29105"/>
    </ligand>
</feature>
<feature type="binding site" evidence="1">
    <location>
        <position position="147"/>
    </location>
    <ligand>
        <name>Zn(2+)</name>
        <dbReference type="ChEBI" id="CHEBI:29105"/>
    </ligand>
</feature>
<feature type="binding site" evidence="1">
    <location>
        <position position="157"/>
    </location>
    <ligand>
        <name>Zn(2+)</name>
        <dbReference type="ChEBI" id="CHEBI:29105"/>
    </ligand>
</feature>
<feature type="binding site" evidence="1">
    <location>
        <position position="160"/>
    </location>
    <ligand>
        <name>Zn(2+)</name>
        <dbReference type="ChEBI" id="CHEBI:29105"/>
    </ligand>
</feature>
<feature type="binding site" evidence="1">
    <location>
        <position position="333"/>
    </location>
    <ligand>
        <name>ATP</name>
        <dbReference type="ChEBI" id="CHEBI:30616"/>
    </ligand>
</feature>
<feature type="sequence variant" description="In strain: CWL029 and TW-183.">
    <original>V</original>
    <variation>A</variation>
    <location>
        <position position="423"/>
    </location>
</feature>
<feature type="sequence conflict" description="In Ref. 1; AAD18275." evidence="2" ref="1">
    <original>D</original>
    <variation>G</variation>
    <location>
        <position position="171"/>
    </location>
</feature>
<keyword id="KW-0030">Aminoacyl-tRNA synthetase</keyword>
<keyword id="KW-0067">ATP-binding</keyword>
<keyword id="KW-0963">Cytoplasm</keyword>
<keyword id="KW-0436">Ligase</keyword>
<keyword id="KW-0479">Metal-binding</keyword>
<keyword id="KW-0547">Nucleotide-binding</keyword>
<keyword id="KW-0648">Protein biosynthesis</keyword>
<keyword id="KW-0862">Zinc</keyword>
<proteinExistence type="inferred from homology"/>
<accession>Q9Z959</accession>
<accession>Q9JRW1</accession>
<organism>
    <name type="scientific">Chlamydia pneumoniae</name>
    <name type="common">Chlamydophila pneumoniae</name>
    <dbReference type="NCBI Taxonomy" id="83558"/>
    <lineage>
        <taxon>Bacteria</taxon>
        <taxon>Pseudomonadati</taxon>
        <taxon>Chlamydiota</taxon>
        <taxon>Chlamydiia</taxon>
        <taxon>Chlamydiales</taxon>
        <taxon>Chlamydiaceae</taxon>
        <taxon>Chlamydia/Chlamydophila group</taxon>
        <taxon>Chlamydia</taxon>
    </lineage>
</organism>
<reference key="1">
    <citation type="journal article" date="1999" name="Nat. Genet.">
        <title>Comparative genomes of Chlamydia pneumoniae and C. trachomatis.</title>
        <authorList>
            <person name="Kalman S."/>
            <person name="Mitchell W.P."/>
            <person name="Marathe R."/>
            <person name="Lammel C.J."/>
            <person name="Fan J."/>
            <person name="Hyman R.W."/>
            <person name="Olinger L."/>
            <person name="Grimwood J."/>
            <person name="Davis R.W."/>
            <person name="Stephens R.S."/>
        </authorList>
    </citation>
    <scope>NUCLEOTIDE SEQUENCE [LARGE SCALE GENOMIC DNA]</scope>
    <source>
        <strain>CWL029</strain>
    </source>
</reference>
<reference key="2">
    <citation type="journal article" date="2000" name="Nucleic Acids Res.">
        <title>Genome sequences of Chlamydia trachomatis MoPn and Chlamydia pneumoniae AR39.</title>
        <authorList>
            <person name="Read T.D."/>
            <person name="Brunham R.C."/>
            <person name="Shen C."/>
            <person name="Gill S.R."/>
            <person name="Heidelberg J.F."/>
            <person name="White O."/>
            <person name="Hickey E.K."/>
            <person name="Peterson J.D."/>
            <person name="Utterback T.R."/>
            <person name="Berry K.J."/>
            <person name="Bass S."/>
            <person name="Linher K.D."/>
            <person name="Weidman J.F."/>
            <person name="Khouri H.M."/>
            <person name="Craven B."/>
            <person name="Bowman C."/>
            <person name="Dodson R.J."/>
            <person name="Gwinn M.L."/>
            <person name="Nelson W.C."/>
            <person name="DeBoy R.T."/>
            <person name="Kolonay J.F."/>
            <person name="McClarty G."/>
            <person name="Salzberg S.L."/>
            <person name="Eisen J.A."/>
            <person name="Fraser C.M."/>
        </authorList>
    </citation>
    <scope>NUCLEOTIDE SEQUENCE [LARGE SCALE GENOMIC DNA]</scope>
    <source>
        <strain>AR39</strain>
    </source>
</reference>
<reference key="3">
    <citation type="journal article" date="2000" name="Nucleic Acids Res.">
        <title>Comparison of whole genome sequences of Chlamydia pneumoniae J138 from Japan and CWL029 from USA.</title>
        <authorList>
            <person name="Shirai M."/>
            <person name="Hirakawa H."/>
            <person name="Kimoto M."/>
            <person name="Tabuchi M."/>
            <person name="Kishi F."/>
            <person name="Ouchi K."/>
            <person name="Shiba T."/>
            <person name="Ishii K."/>
            <person name="Hattori M."/>
            <person name="Kuhara S."/>
            <person name="Nakazawa T."/>
        </authorList>
    </citation>
    <scope>NUCLEOTIDE SEQUENCE [LARGE SCALE GENOMIC DNA]</scope>
    <source>
        <strain>J138</strain>
    </source>
</reference>
<reference key="4">
    <citation type="submission" date="2002-05" db="EMBL/GenBank/DDBJ databases">
        <title>The genome sequence of Chlamydia pneumoniae TW183 and comparison with other Chlamydia strains based on whole genome sequence analysis.</title>
        <authorList>
            <person name="Geng M.M."/>
            <person name="Schuhmacher A."/>
            <person name="Muehldorfer I."/>
            <person name="Bensch K.W."/>
            <person name="Schaefer K.P."/>
            <person name="Schneider S."/>
            <person name="Pohl T."/>
            <person name="Essig A."/>
            <person name="Marre R."/>
            <person name="Melchers K."/>
        </authorList>
    </citation>
    <scope>NUCLEOTIDE SEQUENCE [LARGE SCALE GENOMIC DNA]</scope>
    <source>
        <strain>TW-183</strain>
    </source>
</reference>
<protein>
    <recommendedName>
        <fullName>Methionine--tRNA ligase</fullName>
        <ecNumber>6.1.1.10</ecNumber>
    </recommendedName>
    <alternativeName>
        <fullName>Methionyl-tRNA synthetase</fullName>
        <shortName>MetRS</shortName>
    </alternativeName>
</protein>